<reference key="1">
    <citation type="journal article" date="2008" name="J. Bacteriol.">
        <title>Genome sequence of the chemolithoautotrophic bacterium Oligotropha carboxidovorans OM5T.</title>
        <authorList>
            <person name="Paul D."/>
            <person name="Bridges S."/>
            <person name="Burgess S.C."/>
            <person name="Dandass Y."/>
            <person name="Lawrence M.L."/>
        </authorList>
    </citation>
    <scope>NUCLEOTIDE SEQUENCE [LARGE SCALE GENOMIC DNA]</scope>
    <source>
        <strain>ATCC 49405 / DSM 1227 / KCTC 32145 / OM5</strain>
    </source>
</reference>
<reference key="2">
    <citation type="journal article" date="2011" name="J. Bacteriol.">
        <title>Complete genome sequences of the chemolithoautotrophic Oligotropha carboxidovorans strains OM4 and OM5.</title>
        <authorList>
            <person name="Volland S."/>
            <person name="Rachinger M."/>
            <person name="Strittmatter A."/>
            <person name="Daniel R."/>
            <person name="Gottschalk G."/>
            <person name="Meyer O."/>
        </authorList>
    </citation>
    <scope>NUCLEOTIDE SEQUENCE [LARGE SCALE GENOMIC DNA]</scope>
    <source>
        <strain>ATCC 49405 / DSM 1227 / KCTC 32145 / OM5</strain>
    </source>
</reference>
<dbReference type="EC" id="2.1.1.199" evidence="1"/>
<dbReference type="EMBL" id="CP001196">
    <property type="protein sequence ID" value="ACI92366.1"/>
    <property type="molecule type" value="Genomic_DNA"/>
</dbReference>
<dbReference type="EMBL" id="CP002826">
    <property type="protein sequence ID" value="AEI07429.1"/>
    <property type="molecule type" value="Genomic_DNA"/>
</dbReference>
<dbReference type="RefSeq" id="WP_012562395.1">
    <property type="nucleotide sequence ID" value="NC_015684.1"/>
</dbReference>
<dbReference type="SMR" id="B6JCF0"/>
<dbReference type="STRING" id="504832.OCA5_c27350"/>
<dbReference type="KEGG" id="oca:OCAR_5234"/>
<dbReference type="KEGG" id="ocg:OCA5_c27350"/>
<dbReference type="PATRIC" id="fig|504832.7.peg.2891"/>
<dbReference type="eggNOG" id="COG0275">
    <property type="taxonomic scope" value="Bacteria"/>
</dbReference>
<dbReference type="HOGENOM" id="CLU_038422_1_1_5"/>
<dbReference type="OrthoDB" id="9806637at2"/>
<dbReference type="Proteomes" id="UP000007730">
    <property type="component" value="Chromosome"/>
</dbReference>
<dbReference type="GO" id="GO:0005737">
    <property type="term" value="C:cytoplasm"/>
    <property type="evidence" value="ECO:0007669"/>
    <property type="project" value="UniProtKB-SubCell"/>
</dbReference>
<dbReference type="GO" id="GO:0071424">
    <property type="term" value="F:rRNA (cytosine-N4-)-methyltransferase activity"/>
    <property type="evidence" value="ECO:0007669"/>
    <property type="project" value="UniProtKB-UniRule"/>
</dbReference>
<dbReference type="GO" id="GO:0070475">
    <property type="term" value="P:rRNA base methylation"/>
    <property type="evidence" value="ECO:0007669"/>
    <property type="project" value="UniProtKB-UniRule"/>
</dbReference>
<dbReference type="FunFam" id="1.10.150.170:FF:000003">
    <property type="entry name" value="Ribosomal RNA small subunit methyltransferase H"/>
    <property type="match status" value="1"/>
</dbReference>
<dbReference type="Gene3D" id="1.10.150.170">
    <property type="entry name" value="Putative methyltransferase TM0872, insert domain"/>
    <property type="match status" value="1"/>
</dbReference>
<dbReference type="Gene3D" id="3.40.50.150">
    <property type="entry name" value="Vaccinia Virus protein VP39"/>
    <property type="match status" value="1"/>
</dbReference>
<dbReference type="HAMAP" id="MF_01007">
    <property type="entry name" value="16SrRNA_methyltr_H"/>
    <property type="match status" value="1"/>
</dbReference>
<dbReference type="InterPro" id="IPR002903">
    <property type="entry name" value="RsmH"/>
</dbReference>
<dbReference type="InterPro" id="IPR023397">
    <property type="entry name" value="SAM-dep_MeTrfase_MraW_recog"/>
</dbReference>
<dbReference type="InterPro" id="IPR029063">
    <property type="entry name" value="SAM-dependent_MTases_sf"/>
</dbReference>
<dbReference type="NCBIfam" id="TIGR00006">
    <property type="entry name" value="16S rRNA (cytosine(1402)-N(4))-methyltransferase RsmH"/>
    <property type="match status" value="1"/>
</dbReference>
<dbReference type="PANTHER" id="PTHR11265:SF0">
    <property type="entry name" value="12S RRNA N4-METHYLCYTIDINE METHYLTRANSFERASE"/>
    <property type="match status" value="1"/>
</dbReference>
<dbReference type="PANTHER" id="PTHR11265">
    <property type="entry name" value="S-ADENOSYL-METHYLTRANSFERASE MRAW"/>
    <property type="match status" value="1"/>
</dbReference>
<dbReference type="Pfam" id="PF01795">
    <property type="entry name" value="Methyltransf_5"/>
    <property type="match status" value="1"/>
</dbReference>
<dbReference type="PIRSF" id="PIRSF004486">
    <property type="entry name" value="MraW"/>
    <property type="match status" value="1"/>
</dbReference>
<dbReference type="SUPFAM" id="SSF81799">
    <property type="entry name" value="Putative methyltransferase TM0872, insert domain"/>
    <property type="match status" value="1"/>
</dbReference>
<dbReference type="SUPFAM" id="SSF53335">
    <property type="entry name" value="S-adenosyl-L-methionine-dependent methyltransferases"/>
    <property type="match status" value="1"/>
</dbReference>
<keyword id="KW-0963">Cytoplasm</keyword>
<keyword id="KW-0489">Methyltransferase</keyword>
<keyword id="KW-1185">Reference proteome</keyword>
<keyword id="KW-0698">rRNA processing</keyword>
<keyword id="KW-0949">S-adenosyl-L-methionine</keyword>
<keyword id="KW-0808">Transferase</keyword>
<comment type="function">
    <text evidence="1">Specifically methylates the N4 position of cytidine in position 1402 (C1402) of 16S rRNA.</text>
</comment>
<comment type="catalytic activity">
    <reaction evidence="1">
        <text>cytidine(1402) in 16S rRNA + S-adenosyl-L-methionine = N(4)-methylcytidine(1402) in 16S rRNA + S-adenosyl-L-homocysteine + H(+)</text>
        <dbReference type="Rhea" id="RHEA:42928"/>
        <dbReference type="Rhea" id="RHEA-COMP:10286"/>
        <dbReference type="Rhea" id="RHEA-COMP:10287"/>
        <dbReference type="ChEBI" id="CHEBI:15378"/>
        <dbReference type="ChEBI" id="CHEBI:57856"/>
        <dbReference type="ChEBI" id="CHEBI:59789"/>
        <dbReference type="ChEBI" id="CHEBI:74506"/>
        <dbReference type="ChEBI" id="CHEBI:82748"/>
        <dbReference type="EC" id="2.1.1.199"/>
    </reaction>
</comment>
<comment type="subcellular location">
    <subcellularLocation>
        <location evidence="1">Cytoplasm</location>
    </subcellularLocation>
</comment>
<comment type="similarity">
    <text evidence="1">Belongs to the methyltransferase superfamily. RsmH family.</text>
</comment>
<protein>
    <recommendedName>
        <fullName evidence="1">Ribosomal RNA small subunit methyltransferase H</fullName>
        <ecNumber evidence="1">2.1.1.199</ecNumber>
    </recommendedName>
    <alternativeName>
        <fullName evidence="1">16S rRNA m(4)C1402 methyltransferase</fullName>
    </alternativeName>
    <alternativeName>
        <fullName evidence="1">rRNA (cytosine-N(4)-)-methyltransferase RsmH</fullName>
    </alternativeName>
</protein>
<name>RSMH_AFIC5</name>
<evidence type="ECO:0000255" key="1">
    <source>
        <dbReference type="HAMAP-Rule" id="MF_01007"/>
    </source>
</evidence>
<gene>
    <name evidence="1" type="primary">rsmH</name>
    <name type="synonym">mraW</name>
    <name type="ordered locus">OCAR_5234</name>
    <name type="ordered locus">OCA5_c27350</name>
</gene>
<feature type="chain" id="PRO_0000387015" description="Ribosomal RNA small subunit methyltransferase H">
    <location>
        <begin position="1"/>
        <end position="333"/>
    </location>
</feature>
<feature type="binding site" evidence="1">
    <location>
        <begin position="36"/>
        <end position="38"/>
    </location>
    <ligand>
        <name>S-adenosyl-L-methionine</name>
        <dbReference type="ChEBI" id="CHEBI:59789"/>
    </ligand>
</feature>
<feature type="binding site" evidence="1">
    <location>
        <position position="54"/>
    </location>
    <ligand>
        <name>S-adenosyl-L-methionine</name>
        <dbReference type="ChEBI" id="CHEBI:59789"/>
    </ligand>
</feature>
<feature type="binding site" evidence="1">
    <location>
        <position position="81"/>
    </location>
    <ligand>
        <name>S-adenosyl-L-methionine</name>
        <dbReference type="ChEBI" id="CHEBI:59789"/>
    </ligand>
</feature>
<feature type="binding site" evidence="1">
    <location>
        <position position="102"/>
    </location>
    <ligand>
        <name>S-adenosyl-L-methionine</name>
        <dbReference type="ChEBI" id="CHEBI:59789"/>
    </ligand>
</feature>
<feature type="binding site" evidence="1">
    <location>
        <position position="109"/>
    </location>
    <ligand>
        <name>S-adenosyl-L-methionine</name>
        <dbReference type="ChEBI" id="CHEBI:59789"/>
    </ligand>
</feature>
<proteinExistence type="inferred from homology"/>
<accession>B6JCF0</accession>
<accession>F8BVL6</accession>
<organism>
    <name type="scientific">Afipia carboxidovorans (strain ATCC 49405 / DSM 1227 / KCTC 32145 / OM5)</name>
    <name type="common">Oligotropha carboxidovorans</name>
    <dbReference type="NCBI Taxonomy" id="504832"/>
    <lineage>
        <taxon>Bacteria</taxon>
        <taxon>Pseudomonadati</taxon>
        <taxon>Pseudomonadota</taxon>
        <taxon>Alphaproteobacteria</taxon>
        <taxon>Hyphomicrobiales</taxon>
        <taxon>Nitrobacteraceae</taxon>
        <taxon>Afipia</taxon>
    </lineage>
</organism>
<sequence length="333" mass="36261">MSAAVSRHISVLGREAVEFLAPRAGGIYVDATFGAGGYSRRILAVAGARVIGIDRDRTAIAEAFDLVEQAEGRLTLVQDRFSQLDEVCASQNAPQVDGIVMDIGVSSMQLDRAERGFSFRQDGPLDMRMGQEGASAADVVAVASEKDLANIIYIFGEERHSRAVARAIVRARQEKPILTTKVLADIVASVVHTRPNDIHPATRTFQALRIFVNEELDELQSALHASERTLKPGGRLVVVTFHSLEDRIVKNFINARASRGGGSRHMPDVERTAPSFEILTKRPVVADENEIAANPRARSAKLRAAERTANASHDADTSFDWPTLRTVMKGGRA</sequence>